<evidence type="ECO:0000255" key="1">
    <source>
        <dbReference type="HAMAP-Rule" id="MF_00602"/>
    </source>
</evidence>
<protein>
    <recommendedName>
        <fullName evidence="1">Protein-arginine kinase</fullName>
        <ecNumber evidence="1">2.7.14.1</ecNumber>
    </recommendedName>
</protein>
<keyword id="KW-0067">ATP-binding</keyword>
<keyword id="KW-0418">Kinase</keyword>
<keyword id="KW-0547">Nucleotide-binding</keyword>
<keyword id="KW-0808">Transferase</keyword>
<sequence length="335" mass="38459">MMSNIHTNISEWMKMSEETPVIISSRIRLARNLENHVHPLMFPSEQEGYRVINEVQDALSNLTLNRLDTMDQQSKMKLVAKHLVSPELVKQPASAVMLNDDESVSVMINEEDHIRIQALGTDLSLKDLYQRASKIDDELDKALDISYDEHLGYLTTCPTNIGTGMRASVMLHLPGLSIMKRMNRIAQTINRFGFTIRGIYGEGSQVYGHIYQVSNQLTLGKTEEDIIDNLTEVVNQIINEEKQIRERLDKHNSVETLDRVYRSLGVLQNSRIISMEEASYRLSEVKLGIDLNYILLENFKFNELMVAIQSPFLIDDDDNRTVNEKRADLLREHIK</sequence>
<reference key="1">
    <citation type="journal article" date="2003" name="Mol. Microbiol.">
        <title>Genome-based analysis of virulence genes in a non-biofilm-forming Staphylococcus epidermidis strain (ATCC 12228).</title>
        <authorList>
            <person name="Zhang Y.-Q."/>
            <person name="Ren S.-X."/>
            <person name="Li H.-L."/>
            <person name="Wang Y.-X."/>
            <person name="Fu G."/>
            <person name="Yang J."/>
            <person name="Qin Z.-Q."/>
            <person name="Miao Y.-G."/>
            <person name="Wang W.-Y."/>
            <person name="Chen R.-S."/>
            <person name="Shen Y."/>
            <person name="Chen Z."/>
            <person name="Yuan Z.-H."/>
            <person name="Zhao G.-P."/>
            <person name="Qu D."/>
            <person name="Danchin A."/>
            <person name="Wen Y.-M."/>
        </authorList>
    </citation>
    <scope>NUCLEOTIDE SEQUENCE [LARGE SCALE GENOMIC DNA]</scope>
    <source>
        <strain>ATCC 12228 / FDA PCI 1200</strain>
    </source>
</reference>
<name>MCSB_STAES</name>
<organism>
    <name type="scientific">Staphylococcus epidermidis (strain ATCC 12228 / FDA PCI 1200)</name>
    <dbReference type="NCBI Taxonomy" id="176280"/>
    <lineage>
        <taxon>Bacteria</taxon>
        <taxon>Bacillati</taxon>
        <taxon>Bacillota</taxon>
        <taxon>Bacilli</taxon>
        <taxon>Bacillales</taxon>
        <taxon>Staphylococcaceae</taxon>
        <taxon>Staphylococcus</taxon>
    </lineage>
</organism>
<feature type="chain" id="PRO_0000212034" description="Protein-arginine kinase">
    <location>
        <begin position="1"/>
        <end position="335"/>
    </location>
</feature>
<feature type="domain" description="Phosphagen kinase C-terminal" evidence="1">
    <location>
        <begin position="21"/>
        <end position="244"/>
    </location>
</feature>
<feature type="binding site" evidence="1">
    <location>
        <begin position="24"/>
        <end position="28"/>
    </location>
    <ligand>
        <name>ATP</name>
        <dbReference type="ChEBI" id="CHEBI:30616"/>
    </ligand>
</feature>
<feature type="binding site" evidence="1">
    <location>
        <position position="82"/>
    </location>
    <ligand>
        <name>ATP</name>
        <dbReference type="ChEBI" id="CHEBI:30616"/>
    </ligand>
</feature>
<feature type="binding site" evidence="1">
    <location>
        <position position="115"/>
    </location>
    <ligand>
        <name>ATP</name>
        <dbReference type="ChEBI" id="CHEBI:30616"/>
    </ligand>
</feature>
<feature type="binding site" evidence="1">
    <location>
        <begin position="166"/>
        <end position="170"/>
    </location>
    <ligand>
        <name>ATP</name>
        <dbReference type="ChEBI" id="CHEBI:30616"/>
    </ligand>
</feature>
<feature type="binding site" evidence="1">
    <location>
        <begin position="197"/>
        <end position="202"/>
    </location>
    <ligand>
        <name>ATP</name>
        <dbReference type="ChEBI" id="CHEBI:30616"/>
    </ligand>
</feature>
<proteinExistence type="inferred from homology"/>
<dbReference type="EC" id="2.7.14.1" evidence="1"/>
<dbReference type="EMBL" id="AE015929">
    <property type="protein sequence ID" value="AAO03883.1"/>
    <property type="molecule type" value="Genomic_DNA"/>
</dbReference>
<dbReference type="RefSeq" id="NP_763841.1">
    <property type="nucleotide sequence ID" value="NC_004461.1"/>
</dbReference>
<dbReference type="RefSeq" id="WP_002438663.1">
    <property type="nucleotide sequence ID" value="NZ_WBME01000014.1"/>
</dbReference>
<dbReference type="SMR" id="Q8CTU5"/>
<dbReference type="KEGG" id="sep:SE_0286"/>
<dbReference type="PATRIC" id="fig|176280.10.peg.262"/>
<dbReference type="eggNOG" id="COG3869">
    <property type="taxonomic scope" value="Bacteria"/>
</dbReference>
<dbReference type="HOGENOM" id="CLU_066591_1_0_9"/>
<dbReference type="OrthoDB" id="9791353at2"/>
<dbReference type="Proteomes" id="UP000001411">
    <property type="component" value="Chromosome"/>
</dbReference>
<dbReference type="GO" id="GO:0005615">
    <property type="term" value="C:extracellular space"/>
    <property type="evidence" value="ECO:0007669"/>
    <property type="project" value="TreeGrafter"/>
</dbReference>
<dbReference type="GO" id="GO:0005524">
    <property type="term" value="F:ATP binding"/>
    <property type="evidence" value="ECO:0007669"/>
    <property type="project" value="UniProtKB-KW"/>
</dbReference>
<dbReference type="GO" id="GO:0004111">
    <property type="term" value="F:creatine kinase activity"/>
    <property type="evidence" value="ECO:0007669"/>
    <property type="project" value="InterPro"/>
</dbReference>
<dbReference type="GO" id="GO:0004672">
    <property type="term" value="F:protein kinase activity"/>
    <property type="evidence" value="ECO:0007669"/>
    <property type="project" value="UniProtKB-UniRule"/>
</dbReference>
<dbReference type="GO" id="GO:0046314">
    <property type="term" value="P:phosphocreatine biosynthetic process"/>
    <property type="evidence" value="ECO:0007669"/>
    <property type="project" value="InterPro"/>
</dbReference>
<dbReference type="CDD" id="cd07930">
    <property type="entry name" value="bacterial_phosphagen_kinase"/>
    <property type="match status" value="1"/>
</dbReference>
<dbReference type="FunFam" id="3.30.590.10:FF:000007">
    <property type="entry name" value="Protein-arginine kinase"/>
    <property type="match status" value="1"/>
</dbReference>
<dbReference type="Gene3D" id="3.30.590.10">
    <property type="entry name" value="Glutamine synthetase/guanido kinase, catalytic domain"/>
    <property type="match status" value="1"/>
</dbReference>
<dbReference type="HAMAP" id="MF_00602">
    <property type="entry name" value="Prot_Arg_kinase"/>
    <property type="match status" value="1"/>
</dbReference>
<dbReference type="InterPro" id="IPR023660">
    <property type="entry name" value="Arg_Kinase"/>
</dbReference>
<dbReference type="InterPro" id="IPR000749">
    <property type="entry name" value="ATP-guanido_PTrfase"/>
</dbReference>
<dbReference type="InterPro" id="IPR022415">
    <property type="entry name" value="ATP-guanido_PTrfase_AS"/>
</dbReference>
<dbReference type="InterPro" id="IPR022414">
    <property type="entry name" value="ATP-guanido_PTrfase_cat"/>
</dbReference>
<dbReference type="InterPro" id="IPR014746">
    <property type="entry name" value="Gln_synth/guanido_kin_cat_dom"/>
</dbReference>
<dbReference type="NCBIfam" id="NF002193">
    <property type="entry name" value="PRK01059.1-3"/>
    <property type="match status" value="1"/>
</dbReference>
<dbReference type="PANTHER" id="PTHR11547:SF38">
    <property type="entry name" value="ARGININE KINASE 1-RELATED"/>
    <property type="match status" value="1"/>
</dbReference>
<dbReference type="PANTHER" id="PTHR11547">
    <property type="entry name" value="ARGININE OR CREATINE KINASE"/>
    <property type="match status" value="1"/>
</dbReference>
<dbReference type="Pfam" id="PF00217">
    <property type="entry name" value="ATP-gua_Ptrans"/>
    <property type="match status" value="1"/>
</dbReference>
<dbReference type="SUPFAM" id="SSF55931">
    <property type="entry name" value="Glutamine synthetase/guanido kinase"/>
    <property type="match status" value="1"/>
</dbReference>
<dbReference type="PROSITE" id="PS00112">
    <property type="entry name" value="PHOSPHAGEN_KINASE"/>
    <property type="match status" value="1"/>
</dbReference>
<dbReference type="PROSITE" id="PS51510">
    <property type="entry name" value="PHOSPHAGEN_KINASE_C"/>
    <property type="match status" value="1"/>
</dbReference>
<accession>Q8CTU5</accession>
<comment type="function">
    <text evidence="1">Catalyzes the specific phosphorylation of arginine residues in proteins.</text>
</comment>
<comment type="catalytic activity">
    <reaction evidence="1">
        <text>L-arginyl-[protein] + ATP = N(omega)-phospho-L-arginyl-[protein] + ADP + H(+)</text>
        <dbReference type="Rhea" id="RHEA:43384"/>
        <dbReference type="Rhea" id="RHEA-COMP:10532"/>
        <dbReference type="Rhea" id="RHEA-COMP:10533"/>
        <dbReference type="ChEBI" id="CHEBI:15378"/>
        <dbReference type="ChEBI" id="CHEBI:29965"/>
        <dbReference type="ChEBI" id="CHEBI:30616"/>
        <dbReference type="ChEBI" id="CHEBI:83226"/>
        <dbReference type="ChEBI" id="CHEBI:456216"/>
        <dbReference type="EC" id="2.7.14.1"/>
    </reaction>
</comment>
<comment type="similarity">
    <text evidence="1">Belongs to the ATP:guanido phosphotransferase family.</text>
</comment>
<gene>
    <name evidence="1" type="primary">mcsB</name>
    <name type="ordered locus">SE_0286</name>
</gene>